<dbReference type="EC" id="3.6.1.23" evidence="1"/>
<dbReference type="EMBL" id="CP001488">
    <property type="protein sequence ID" value="ACO01414.1"/>
    <property type="molecule type" value="Genomic_DNA"/>
</dbReference>
<dbReference type="RefSeq" id="WP_002964766.1">
    <property type="nucleotide sequence ID" value="NC_012441.1"/>
</dbReference>
<dbReference type="SMR" id="C0REU2"/>
<dbReference type="GeneID" id="97533165"/>
<dbReference type="KEGG" id="bmi:BMEA_A1728"/>
<dbReference type="HOGENOM" id="CLU_068508_1_0_5"/>
<dbReference type="UniPathway" id="UPA00610">
    <property type="reaction ID" value="UER00666"/>
</dbReference>
<dbReference type="PRO" id="PR:C0REU2"/>
<dbReference type="Proteomes" id="UP000001748">
    <property type="component" value="Chromosome I"/>
</dbReference>
<dbReference type="GO" id="GO:0004170">
    <property type="term" value="F:dUTP diphosphatase activity"/>
    <property type="evidence" value="ECO:0007669"/>
    <property type="project" value="UniProtKB-UniRule"/>
</dbReference>
<dbReference type="GO" id="GO:0000287">
    <property type="term" value="F:magnesium ion binding"/>
    <property type="evidence" value="ECO:0007669"/>
    <property type="project" value="UniProtKB-UniRule"/>
</dbReference>
<dbReference type="GO" id="GO:0006226">
    <property type="term" value="P:dUMP biosynthetic process"/>
    <property type="evidence" value="ECO:0007669"/>
    <property type="project" value="UniProtKB-UniRule"/>
</dbReference>
<dbReference type="GO" id="GO:0046081">
    <property type="term" value="P:dUTP catabolic process"/>
    <property type="evidence" value="ECO:0007669"/>
    <property type="project" value="InterPro"/>
</dbReference>
<dbReference type="CDD" id="cd07557">
    <property type="entry name" value="trimeric_dUTPase"/>
    <property type="match status" value="1"/>
</dbReference>
<dbReference type="Gene3D" id="2.70.40.10">
    <property type="match status" value="1"/>
</dbReference>
<dbReference type="HAMAP" id="MF_00116">
    <property type="entry name" value="dUTPase_bact"/>
    <property type="match status" value="1"/>
</dbReference>
<dbReference type="InterPro" id="IPR008181">
    <property type="entry name" value="dUTPase"/>
</dbReference>
<dbReference type="InterPro" id="IPR029054">
    <property type="entry name" value="dUTPase-like"/>
</dbReference>
<dbReference type="InterPro" id="IPR036157">
    <property type="entry name" value="dUTPase-like_sf"/>
</dbReference>
<dbReference type="InterPro" id="IPR033704">
    <property type="entry name" value="dUTPase_trimeric"/>
</dbReference>
<dbReference type="NCBIfam" id="TIGR00576">
    <property type="entry name" value="dut"/>
    <property type="match status" value="1"/>
</dbReference>
<dbReference type="NCBIfam" id="NF001862">
    <property type="entry name" value="PRK00601.1"/>
    <property type="match status" value="1"/>
</dbReference>
<dbReference type="PANTHER" id="PTHR11241">
    <property type="entry name" value="DEOXYURIDINE 5'-TRIPHOSPHATE NUCLEOTIDOHYDROLASE"/>
    <property type="match status" value="1"/>
</dbReference>
<dbReference type="PANTHER" id="PTHR11241:SF0">
    <property type="entry name" value="DEOXYURIDINE 5'-TRIPHOSPHATE NUCLEOTIDOHYDROLASE"/>
    <property type="match status" value="1"/>
</dbReference>
<dbReference type="Pfam" id="PF00692">
    <property type="entry name" value="dUTPase"/>
    <property type="match status" value="1"/>
</dbReference>
<dbReference type="SUPFAM" id="SSF51283">
    <property type="entry name" value="dUTPase-like"/>
    <property type="match status" value="1"/>
</dbReference>
<keyword id="KW-0378">Hydrolase</keyword>
<keyword id="KW-0460">Magnesium</keyword>
<keyword id="KW-0479">Metal-binding</keyword>
<keyword id="KW-0546">Nucleotide metabolism</keyword>
<feature type="chain" id="PRO_1000119227" description="Deoxyuridine 5'-triphosphate nucleotidohydrolase">
    <location>
        <begin position="1"/>
        <end position="157"/>
    </location>
</feature>
<feature type="binding site" evidence="1">
    <location>
        <begin position="76"/>
        <end position="78"/>
    </location>
    <ligand>
        <name>substrate</name>
    </ligand>
</feature>
<feature type="binding site" evidence="1">
    <location>
        <position position="89"/>
    </location>
    <ligand>
        <name>substrate</name>
    </ligand>
</feature>
<feature type="binding site" evidence="1">
    <location>
        <begin position="93"/>
        <end position="95"/>
    </location>
    <ligand>
        <name>substrate</name>
    </ligand>
</feature>
<feature type="binding site" evidence="1">
    <location>
        <position position="103"/>
    </location>
    <ligand>
        <name>substrate</name>
    </ligand>
</feature>
<name>DUT_BRUMB</name>
<evidence type="ECO:0000255" key="1">
    <source>
        <dbReference type="HAMAP-Rule" id="MF_00116"/>
    </source>
</evidence>
<accession>C0REU2</accession>
<proteinExistence type="inferred from homology"/>
<protein>
    <recommendedName>
        <fullName evidence="1">Deoxyuridine 5'-triphosphate nucleotidohydrolase</fullName>
        <shortName evidence="1">dUTPase</shortName>
        <ecNumber evidence="1">3.6.1.23</ecNumber>
    </recommendedName>
    <alternativeName>
        <fullName evidence="1">dUTP pyrophosphatase</fullName>
    </alternativeName>
</protein>
<gene>
    <name evidence="1" type="primary">dut</name>
    <name type="ordered locus">BMEA_A1728</name>
</gene>
<reference key="1">
    <citation type="submission" date="2009-03" db="EMBL/GenBank/DDBJ databases">
        <title>Brucella melitensis ATCC 23457 whole genome shotgun sequencing project.</title>
        <authorList>
            <person name="Setubal J.C."/>
            <person name="Boyle S."/>
            <person name="Crasta O.R."/>
            <person name="Gillespie J.J."/>
            <person name="Kenyon R.W."/>
            <person name="Lu J."/>
            <person name="Mane S."/>
            <person name="Nagrani S."/>
            <person name="Shallom J.M."/>
            <person name="Shallom S."/>
            <person name="Shukla M."/>
            <person name="Snyder E.E."/>
            <person name="Sobral B.W."/>
            <person name="Wattam A.R."/>
            <person name="Will R."/>
            <person name="Williams K."/>
            <person name="Yoo H."/>
            <person name="Munk C."/>
            <person name="Tapia R."/>
            <person name="Han C."/>
            <person name="Detter J.C."/>
            <person name="Bruce D."/>
            <person name="Brettin T.S."/>
        </authorList>
    </citation>
    <scope>NUCLEOTIDE SEQUENCE [LARGE SCALE GENOMIC DNA]</scope>
    <source>
        <strain>ATCC 23457</strain>
    </source>
</reference>
<sequence length="157" mass="16660">MTAASSSAPTLGIIRLEHAKGLDLPAYETAGSAGMDLRAAVAEDRQIVLLPGRRTLVPTGLILEIPQGYEVQIRPRSGLAFKNGITCLNTPGTIDSDYRGEVKVLLINLGDDDFRIERGMRIAQAVFAPVIQPKIEERAKISETARGAGGFGSTGTA</sequence>
<organism>
    <name type="scientific">Brucella melitensis biotype 2 (strain ATCC 23457)</name>
    <dbReference type="NCBI Taxonomy" id="546272"/>
    <lineage>
        <taxon>Bacteria</taxon>
        <taxon>Pseudomonadati</taxon>
        <taxon>Pseudomonadota</taxon>
        <taxon>Alphaproteobacteria</taxon>
        <taxon>Hyphomicrobiales</taxon>
        <taxon>Brucellaceae</taxon>
        <taxon>Brucella/Ochrobactrum group</taxon>
        <taxon>Brucella</taxon>
    </lineage>
</organism>
<comment type="function">
    <text evidence="1">This enzyme is involved in nucleotide metabolism: it produces dUMP, the immediate precursor of thymidine nucleotides and it decreases the intracellular concentration of dUTP so that uracil cannot be incorporated into DNA.</text>
</comment>
<comment type="catalytic activity">
    <reaction evidence="1">
        <text>dUTP + H2O = dUMP + diphosphate + H(+)</text>
        <dbReference type="Rhea" id="RHEA:10248"/>
        <dbReference type="ChEBI" id="CHEBI:15377"/>
        <dbReference type="ChEBI" id="CHEBI:15378"/>
        <dbReference type="ChEBI" id="CHEBI:33019"/>
        <dbReference type="ChEBI" id="CHEBI:61555"/>
        <dbReference type="ChEBI" id="CHEBI:246422"/>
        <dbReference type="EC" id="3.6.1.23"/>
    </reaction>
</comment>
<comment type="cofactor">
    <cofactor evidence="1">
        <name>Mg(2+)</name>
        <dbReference type="ChEBI" id="CHEBI:18420"/>
    </cofactor>
</comment>
<comment type="pathway">
    <text evidence="1">Pyrimidine metabolism; dUMP biosynthesis; dUMP from dCTP (dUTP route): step 2/2.</text>
</comment>
<comment type="similarity">
    <text evidence="1">Belongs to the dUTPase family.</text>
</comment>